<protein>
    <recommendedName>
        <fullName evidence="1">Protein-L-isoaspartate O-methyltransferase</fullName>
        <ecNumber evidence="1">2.1.1.77</ecNumber>
    </recommendedName>
    <alternativeName>
        <fullName evidence="1">L-isoaspartyl protein carboxyl methyltransferase</fullName>
    </alternativeName>
    <alternativeName>
        <fullName evidence="1">Protein L-isoaspartyl methyltransferase</fullName>
    </alternativeName>
    <alternativeName>
        <fullName evidence="1">Protein-beta-aspartate methyltransferase</fullName>
        <shortName evidence="1">PIMT</shortName>
    </alternativeName>
</protein>
<accession>Q0A7L5</accession>
<sequence>MDPNRYQGIGMTSRRTRERLVSRLAEEGIRDPRVLQAILEVPRHLFVDEALASRAYDNTPLPIGHGQTISQPWVVARMTELLIEQSIPERVLELGTGSGYQAAVLAYLGVEVYTIERIKALADQARQRMRDLRLHRVHVRYGDGSEGWAQHAPYQGIIVTAAPEEVPDPLWDQLDEGGRLVAPLGGAGRPQELVLIERVDGELRRRHVASVSFVPLLGGCR</sequence>
<dbReference type="EC" id="2.1.1.77" evidence="1"/>
<dbReference type="EMBL" id="CP000453">
    <property type="protein sequence ID" value="ABI57172.1"/>
    <property type="molecule type" value="Genomic_DNA"/>
</dbReference>
<dbReference type="RefSeq" id="WP_011629566.1">
    <property type="nucleotide sequence ID" value="NC_008340.1"/>
</dbReference>
<dbReference type="SMR" id="Q0A7L5"/>
<dbReference type="KEGG" id="aeh:Mlg_1828"/>
<dbReference type="eggNOG" id="COG2518">
    <property type="taxonomic scope" value="Bacteria"/>
</dbReference>
<dbReference type="HOGENOM" id="CLU_055432_2_0_6"/>
<dbReference type="OrthoDB" id="9810066at2"/>
<dbReference type="Proteomes" id="UP000001962">
    <property type="component" value="Chromosome"/>
</dbReference>
<dbReference type="GO" id="GO:0005737">
    <property type="term" value="C:cytoplasm"/>
    <property type="evidence" value="ECO:0007669"/>
    <property type="project" value="UniProtKB-SubCell"/>
</dbReference>
<dbReference type="GO" id="GO:0004719">
    <property type="term" value="F:protein-L-isoaspartate (D-aspartate) O-methyltransferase activity"/>
    <property type="evidence" value="ECO:0007669"/>
    <property type="project" value="UniProtKB-UniRule"/>
</dbReference>
<dbReference type="GO" id="GO:0032259">
    <property type="term" value="P:methylation"/>
    <property type="evidence" value="ECO:0007669"/>
    <property type="project" value="UniProtKB-KW"/>
</dbReference>
<dbReference type="GO" id="GO:0036211">
    <property type="term" value="P:protein modification process"/>
    <property type="evidence" value="ECO:0007669"/>
    <property type="project" value="UniProtKB-UniRule"/>
</dbReference>
<dbReference type="GO" id="GO:0030091">
    <property type="term" value="P:protein repair"/>
    <property type="evidence" value="ECO:0007669"/>
    <property type="project" value="UniProtKB-UniRule"/>
</dbReference>
<dbReference type="CDD" id="cd02440">
    <property type="entry name" value="AdoMet_MTases"/>
    <property type="match status" value="1"/>
</dbReference>
<dbReference type="FunFam" id="3.40.50.150:FF:000010">
    <property type="entry name" value="Protein-L-isoaspartate O-methyltransferase"/>
    <property type="match status" value="1"/>
</dbReference>
<dbReference type="Gene3D" id="3.40.50.150">
    <property type="entry name" value="Vaccinia Virus protein VP39"/>
    <property type="match status" value="1"/>
</dbReference>
<dbReference type="HAMAP" id="MF_00090">
    <property type="entry name" value="PIMT"/>
    <property type="match status" value="1"/>
</dbReference>
<dbReference type="InterPro" id="IPR000682">
    <property type="entry name" value="PCMT"/>
</dbReference>
<dbReference type="InterPro" id="IPR029063">
    <property type="entry name" value="SAM-dependent_MTases_sf"/>
</dbReference>
<dbReference type="NCBIfam" id="TIGR00080">
    <property type="entry name" value="pimt"/>
    <property type="match status" value="1"/>
</dbReference>
<dbReference type="NCBIfam" id="NF001453">
    <property type="entry name" value="PRK00312.1"/>
    <property type="match status" value="1"/>
</dbReference>
<dbReference type="PANTHER" id="PTHR11579">
    <property type="entry name" value="PROTEIN-L-ISOASPARTATE O-METHYLTRANSFERASE"/>
    <property type="match status" value="1"/>
</dbReference>
<dbReference type="PANTHER" id="PTHR11579:SF0">
    <property type="entry name" value="PROTEIN-L-ISOASPARTATE(D-ASPARTATE) O-METHYLTRANSFERASE"/>
    <property type="match status" value="1"/>
</dbReference>
<dbReference type="Pfam" id="PF01135">
    <property type="entry name" value="PCMT"/>
    <property type="match status" value="1"/>
</dbReference>
<dbReference type="SUPFAM" id="SSF53335">
    <property type="entry name" value="S-adenosyl-L-methionine-dependent methyltransferases"/>
    <property type="match status" value="1"/>
</dbReference>
<keyword id="KW-0963">Cytoplasm</keyword>
<keyword id="KW-0489">Methyltransferase</keyword>
<keyword id="KW-1185">Reference proteome</keyword>
<keyword id="KW-0949">S-adenosyl-L-methionine</keyword>
<keyword id="KW-0808">Transferase</keyword>
<gene>
    <name evidence="1" type="primary">pcm</name>
    <name type="ordered locus">Mlg_1828</name>
</gene>
<feature type="chain" id="PRO_0000351811" description="Protein-L-isoaspartate O-methyltransferase">
    <location>
        <begin position="1"/>
        <end position="221"/>
    </location>
</feature>
<feature type="active site" evidence="1">
    <location>
        <position position="70"/>
    </location>
</feature>
<organism>
    <name type="scientific">Alkalilimnicola ehrlichii (strain ATCC BAA-1101 / DSM 17681 / MLHE-1)</name>
    <dbReference type="NCBI Taxonomy" id="187272"/>
    <lineage>
        <taxon>Bacteria</taxon>
        <taxon>Pseudomonadati</taxon>
        <taxon>Pseudomonadota</taxon>
        <taxon>Gammaproteobacteria</taxon>
        <taxon>Chromatiales</taxon>
        <taxon>Ectothiorhodospiraceae</taxon>
        <taxon>Alkalilimnicola</taxon>
    </lineage>
</organism>
<name>PIMT_ALKEH</name>
<proteinExistence type="inferred from homology"/>
<reference key="1">
    <citation type="submission" date="2006-08" db="EMBL/GenBank/DDBJ databases">
        <title>Complete sequence of Alkalilimnicola ehrilichei MLHE-1.</title>
        <authorList>
            <person name="Copeland A."/>
            <person name="Lucas S."/>
            <person name="Lapidus A."/>
            <person name="Barry K."/>
            <person name="Detter J.C."/>
            <person name="Glavina del Rio T."/>
            <person name="Hammon N."/>
            <person name="Israni S."/>
            <person name="Dalin E."/>
            <person name="Tice H."/>
            <person name="Pitluck S."/>
            <person name="Sims D."/>
            <person name="Brettin T."/>
            <person name="Bruce D."/>
            <person name="Han C."/>
            <person name="Tapia R."/>
            <person name="Gilna P."/>
            <person name="Schmutz J."/>
            <person name="Larimer F."/>
            <person name="Land M."/>
            <person name="Hauser L."/>
            <person name="Kyrpides N."/>
            <person name="Mikhailova N."/>
            <person name="Oremland R.S."/>
            <person name="Hoeft S.E."/>
            <person name="Switzer-Blum J."/>
            <person name="Kulp T."/>
            <person name="King G."/>
            <person name="Tabita R."/>
            <person name="Witte B."/>
            <person name="Santini J.M."/>
            <person name="Basu P."/>
            <person name="Hollibaugh J.T."/>
            <person name="Xie G."/>
            <person name="Stolz J.F."/>
            <person name="Richardson P."/>
        </authorList>
    </citation>
    <scope>NUCLEOTIDE SEQUENCE [LARGE SCALE GENOMIC DNA]</scope>
    <source>
        <strain>ATCC BAA-1101 / DSM 17681 / MLHE-1</strain>
    </source>
</reference>
<comment type="function">
    <text evidence="1">Catalyzes the methyl esterification of L-isoaspartyl residues in peptides and proteins that result from spontaneous decomposition of normal L-aspartyl and L-asparaginyl residues. It plays a role in the repair and/or degradation of damaged proteins.</text>
</comment>
<comment type="catalytic activity">
    <reaction evidence="1">
        <text>[protein]-L-isoaspartate + S-adenosyl-L-methionine = [protein]-L-isoaspartate alpha-methyl ester + S-adenosyl-L-homocysteine</text>
        <dbReference type="Rhea" id="RHEA:12705"/>
        <dbReference type="Rhea" id="RHEA-COMP:12143"/>
        <dbReference type="Rhea" id="RHEA-COMP:12144"/>
        <dbReference type="ChEBI" id="CHEBI:57856"/>
        <dbReference type="ChEBI" id="CHEBI:59789"/>
        <dbReference type="ChEBI" id="CHEBI:90596"/>
        <dbReference type="ChEBI" id="CHEBI:90598"/>
        <dbReference type="EC" id="2.1.1.77"/>
    </reaction>
</comment>
<comment type="subcellular location">
    <subcellularLocation>
        <location evidence="1">Cytoplasm</location>
    </subcellularLocation>
</comment>
<comment type="similarity">
    <text evidence="1">Belongs to the methyltransferase superfamily. L-isoaspartyl/D-aspartyl protein methyltransferase family.</text>
</comment>
<evidence type="ECO:0000255" key="1">
    <source>
        <dbReference type="HAMAP-Rule" id="MF_00090"/>
    </source>
</evidence>